<dbReference type="EC" id="2.3.1.234" evidence="1"/>
<dbReference type="EMBL" id="AE017245">
    <property type="protein sequence ID" value="AAZ43437.1"/>
    <property type="status" value="ALT_INIT"/>
    <property type="molecule type" value="Genomic_DNA"/>
</dbReference>
<dbReference type="RefSeq" id="WP_011283181.1">
    <property type="nucleotide sequence ID" value="NC_007294.1"/>
</dbReference>
<dbReference type="SMR" id="Q4A734"/>
<dbReference type="STRING" id="262723.MS53_0015"/>
<dbReference type="KEGG" id="msy:MS53_0015"/>
<dbReference type="eggNOG" id="COG0533">
    <property type="taxonomic scope" value="Bacteria"/>
</dbReference>
<dbReference type="HOGENOM" id="CLU_023208_0_2_14"/>
<dbReference type="OrthoDB" id="9806197at2"/>
<dbReference type="Proteomes" id="UP000000549">
    <property type="component" value="Chromosome"/>
</dbReference>
<dbReference type="GO" id="GO:0005737">
    <property type="term" value="C:cytoplasm"/>
    <property type="evidence" value="ECO:0007669"/>
    <property type="project" value="UniProtKB-SubCell"/>
</dbReference>
<dbReference type="GO" id="GO:0005506">
    <property type="term" value="F:iron ion binding"/>
    <property type="evidence" value="ECO:0007669"/>
    <property type="project" value="UniProtKB-UniRule"/>
</dbReference>
<dbReference type="GO" id="GO:0061711">
    <property type="term" value="F:N(6)-L-threonylcarbamoyladenine synthase activity"/>
    <property type="evidence" value="ECO:0007669"/>
    <property type="project" value="UniProtKB-EC"/>
</dbReference>
<dbReference type="GO" id="GO:0002949">
    <property type="term" value="P:tRNA threonylcarbamoyladenosine modification"/>
    <property type="evidence" value="ECO:0007669"/>
    <property type="project" value="UniProtKB-UniRule"/>
</dbReference>
<dbReference type="Gene3D" id="3.30.420.40">
    <property type="match status" value="2"/>
</dbReference>
<dbReference type="HAMAP" id="MF_01445">
    <property type="entry name" value="TsaD"/>
    <property type="match status" value="1"/>
</dbReference>
<dbReference type="InterPro" id="IPR043129">
    <property type="entry name" value="ATPase_NBD"/>
</dbReference>
<dbReference type="InterPro" id="IPR000905">
    <property type="entry name" value="Gcp-like_dom"/>
</dbReference>
<dbReference type="InterPro" id="IPR017861">
    <property type="entry name" value="KAE1/TsaD"/>
</dbReference>
<dbReference type="InterPro" id="IPR022450">
    <property type="entry name" value="TsaD"/>
</dbReference>
<dbReference type="NCBIfam" id="TIGR00329">
    <property type="entry name" value="gcp_kae1"/>
    <property type="match status" value="1"/>
</dbReference>
<dbReference type="NCBIfam" id="TIGR03723">
    <property type="entry name" value="T6A_TsaD_YgjD"/>
    <property type="match status" value="1"/>
</dbReference>
<dbReference type="PANTHER" id="PTHR11735">
    <property type="entry name" value="TRNA N6-ADENOSINE THREONYLCARBAMOYLTRANSFERASE"/>
    <property type="match status" value="1"/>
</dbReference>
<dbReference type="PANTHER" id="PTHR11735:SF6">
    <property type="entry name" value="TRNA N6-ADENOSINE THREONYLCARBAMOYLTRANSFERASE, MITOCHONDRIAL"/>
    <property type="match status" value="1"/>
</dbReference>
<dbReference type="Pfam" id="PF00814">
    <property type="entry name" value="TsaD"/>
    <property type="match status" value="1"/>
</dbReference>
<dbReference type="PRINTS" id="PR00789">
    <property type="entry name" value="OSIALOPTASE"/>
</dbReference>
<dbReference type="SUPFAM" id="SSF53067">
    <property type="entry name" value="Actin-like ATPase domain"/>
    <property type="match status" value="1"/>
</dbReference>
<keyword id="KW-0012">Acyltransferase</keyword>
<keyword id="KW-0963">Cytoplasm</keyword>
<keyword id="KW-0408">Iron</keyword>
<keyword id="KW-0479">Metal-binding</keyword>
<keyword id="KW-1185">Reference proteome</keyword>
<keyword id="KW-0808">Transferase</keyword>
<keyword id="KW-0819">tRNA processing</keyword>
<comment type="function">
    <text evidence="1">Required for the formation of a threonylcarbamoyl group on adenosine at position 37 (t(6)A37) in tRNAs that read codons beginning with adenine. Is involved in the transfer of the threonylcarbamoyl moiety of threonylcarbamoyl-AMP (TC-AMP) to the N6 group of A37, together with TsaE and TsaB. TsaD likely plays a direct catalytic role in this reaction.</text>
</comment>
<comment type="catalytic activity">
    <reaction evidence="1">
        <text>L-threonylcarbamoyladenylate + adenosine(37) in tRNA = N(6)-L-threonylcarbamoyladenosine(37) in tRNA + AMP + H(+)</text>
        <dbReference type="Rhea" id="RHEA:37059"/>
        <dbReference type="Rhea" id="RHEA-COMP:10162"/>
        <dbReference type="Rhea" id="RHEA-COMP:10163"/>
        <dbReference type="ChEBI" id="CHEBI:15378"/>
        <dbReference type="ChEBI" id="CHEBI:73682"/>
        <dbReference type="ChEBI" id="CHEBI:74411"/>
        <dbReference type="ChEBI" id="CHEBI:74418"/>
        <dbReference type="ChEBI" id="CHEBI:456215"/>
        <dbReference type="EC" id="2.3.1.234"/>
    </reaction>
</comment>
<comment type="cofactor">
    <cofactor evidence="1">
        <name>Fe(2+)</name>
        <dbReference type="ChEBI" id="CHEBI:29033"/>
    </cofactor>
    <text evidence="1">Binds 1 Fe(2+) ion per subunit.</text>
</comment>
<comment type="subcellular location">
    <subcellularLocation>
        <location evidence="1">Cytoplasm</location>
    </subcellularLocation>
</comment>
<comment type="similarity">
    <text evidence="1">Belongs to the KAE1 / TsaD family.</text>
</comment>
<comment type="sequence caution" evidence="2">
    <conflict type="erroneous initiation">
        <sequence resource="EMBL-CDS" id="AAZ43437"/>
    </conflict>
</comment>
<proteinExistence type="inferred from homology"/>
<feature type="chain" id="PRO_0000303446" description="tRNA N6-adenosine threonylcarbamoyltransferase">
    <location>
        <begin position="1"/>
        <end position="307"/>
    </location>
</feature>
<feature type="binding site" evidence="1">
    <location>
        <position position="108"/>
    </location>
    <ligand>
        <name>Fe cation</name>
        <dbReference type="ChEBI" id="CHEBI:24875"/>
    </ligand>
</feature>
<feature type="binding site" evidence="1">
    <location>
        <position position="112"/>
    </location>
    <ligand>
        <name>Fe cation</name>
        <dbReference type="ChEBI" id="CHEBI:24875"/>
    </ligand>
</feature>
<feature type="binding site" evidence="1">
    <location>
        <begin position="131"/>
        <end position="135"/>
    </location>
    <ligand>
        <name>substrate</name>
    </ligand>
</feature>
<feature type="binding site" evidence="1">
    <location>
        <position position="164"/>
    </location>
    <ligand>
        <name>substrate</name>
    </ligand>
</feature>
<feature type="binding site" evidence="1">
    <location>
        <position position="177"/>
    </location>
    <ligand>
        <name>substrate</name>
    </ligand>
</feature>
<feature type="binding site" evidence="1">
    <location>
        <position position="181"/>
    </location>
    <ligand>
        <name>substrate</name>
    </ligand>
</feature>
<feature type="binding site" evidence="1">
    <location>
        <position position="266"/>
    </location>
    <ligand>
        <name>substrate</name>
    </ligand>
</feature>
<feature type="binding site" evidence="1">
    <location>
        <position position="290"/>
    </location>
    <ligand>
        <name>Fe cation</name>
        <dbReference type="ChEBI" id="CHEBI:24875"/>
    </ligand>
</feature>
<sequence>MIILGIETSHDDSSIAILEDGKVLNMWSISQIDIFKKYGGTIPEIASREHVKNIAILQNFLQEFIDLNKIDHIAYTSEPGLIGCLQVGFLFASALSIALNKPLIKINHLDGHFFSGAIDNKEIKYPALGLIVSGGHSQIIYAKNKFDFQIVGETLDDAIGECYDKVSSRLNLGFPGGPIIDKIHASYKGKYLKLTKPKTSGEFDFSFSGIKTQVLNAFNNKKYESIEQIAASFQEVAINYLIEKFKLAIDKFKPESILLGGGVSANKYLREKFKDLHKNTIFPEIKYATDNGAMIAMCAYLRMKKNS</sequence>
<name>TSAD_MYCS5</name>
<reference key="1">
    <citation type="journal article" date="2005" name="J. Bacteriol.">
        <title>Swine and poultry pathogens: the complete genome sequences of two strains of Mycoplasma hyopneumoniae and a strain of Mycoplasma synoviae.</title>
        <authorList>
            <person name="Vasconcelos A.T.R."/>
            <person name="Ferreira H.B."/>
            <person name="Bizarro C.V."/>
            <person name="Bonatto S.L."/>
            <person name="Carvalho M.O."/>
            <person name="Pinto P.M."/>
            <person name="Almeida D.F."/>
            <person name="Almeida L.G.P."/>
            <person name="Almeida R."/>
            <person name="Alves-Junior L."/>
            <person name="Assuncao E.N."/>
            <person name="Azevedo V.A.C."/>
            <person name="Bogo M.R."/>
            <person name="Brigido M.M."/>
            <person name="Brocchi M."/>
            <person name="Burity H.A."/>
            <person name="Camargo A.A."/>
            <person name="Camargo S.S."/>
            <person name="Carepo M.S."/>
            <person name="Carraro D.M."/>
            <person name="de Mattos Cascardo J.C."/>
            <person name="Castro L.A."/>
            <person name="Cavalcanti G."/>
            <person name="Chemale G."/>
            <person name="Collevatti R.G."/>
            <person name="Cunha C.W."/>
            <person name="Dallagiovanna B."/>
            <person name="Dambros B.P."/>
            <person name="Dellagostin O.A."/>
            <person name="Falcao C."/>
            <person name="Fantinatti-Garboggini F."/>
            <person name="Felipe M.S.S."/>
            <person name="Fiorentin L."/>
            <person name="Franco G.R."/>
            <person name="Freitas N.S.A."/>
            <person name="Frias D."/>
            <person name="Grangeiro T.B."/>
            <person name="Grisard E.C."/>
            <person name="Guimaraes C.T."/>
            <person name="Hungria M."/>
            <person name="Jardim S.N."/>
            <person name="Krieger M.A."/>
            <person name="Laurino J.P."/>
            <person name="Lima L.F.A."/>
            <person name="Lopes M.I."/>
            <person name="Loreto E.L.S."/>
            <person name="Madeira H.M.F."/>
            <person name="Manfio G.P."/>
            <person name="Maranhao A.Q."/>
            <person name="Martinkovics C.T."/>
            <person name="Medeiros S.R.B."/>
            <person name="Moreira M.A.M."/>
            <person name="Neiva M."/>
            <person name="Ramalho-Neto C.E."/>
            <person name="Nicolas M.F."/>
            <person name="Oliveira S.C."/>
            <person name="Paixao R.F.C."/>
            <person name="Pedrosa F.O."/>
            <person name="Pena S.D.J."/>
            <person name="Pereira M."/>
            <person name="Pereira-Ferrari L."/>
            <person name="Piffer I."/>
            <person name="Pinto L.S."/>
            <person name="Potrich D.P."/>
            <person name="Salim A.C.M."/>
            <person name="Santos F.R."/>
            <person name="Schmitt R."/>
            <person name="Schneider M.P.C."/>
            <person name="Schrank A."/>
            <person name="Schrank I.S."/>
            <person name="Schuck A.F."/>
            <person name="Seuanez H.N."/>
            <person name="Silva D.W."/>
            <person name="Silva R."/>
            <person name="Silva S.C."/>
            <person name="Soares C.M.A."/>
            <person name="Souza K.R.L."/>
            <person name="Souza R.C."/>
            <person name="Staats C.C."/>
            <person name="Steffens M.B.R."/>
            <person name="Teixeira S.M.R."/>
            <person name="Urmenyi T.P."/>
            <person name="Vainstein M.H."/>
            <person name="Zuccherato L.W."/>
            <person name="Simpson A.J.G."/>
            <person name="Zaha A."/>
        </authorList>
    </citation>
    <scope>NUCLEOTIDE SEQUENCE [LARGE SCALE GENOMIC DNA]</scope>
    <source>
        <strain>53</strain>
    </source>
</reference>
<gene>
    <name evidence="1" type="primary">tsaD</name>
    <name type="synonym">gcp</name>
    <name type="ordered locus">MS53_0015</name>
</gene>
<accession>Q4A734</accession>
<evidence type="ECO:0000255" key="1">
    <source>
        <dbReference type="HAMAP-Rule" id="MF_01445"/>
    </source>
</evidence>
<evidence type="ECO:0000305" key="2"/>
<protein>
    <recommendedName>
        <fullName evidence="1">tRNA N6-adenosine threonylcarbamoyltransferase</fullName>
        <ecNumber evidence="1">2.3.1.234</ecNumber>
    </recommendedName>
    <alternativeName>
        <fullName evidence="1">N6-L-threonylcarbamoyladenine synthase</fullName>
        <shortName evidence="1">t(6)A synthase</shortName>
    </alternativeName>
    <alternativeName>
        <fullName evidence="1">t(6)A37 threonylcarbamoyladenosine biosynthesis protein TsaD</fullName>
    </alternativeName>
    <alternativeName>
        <fullName evidence="1">tRNA threonylcarbamoyladenosine biosynthesis protein TsaD</fullName>
    </alternativeName>
</protein>
<organism>
    <name type="scientific">Mycoplasmopsis synoviae (strain 53)</name>
    <name type="common">Mycoplasma synoviae</name>
    <dbReference type="NCBI Taxonomy" id="262723"/>
    <lineage>
        <taxon>Bacteria</taxon>
        <taxon>Bacillati</taxon>
        <taxon>Mycoplasmatota</taxon>
        <taxon>Mycoplasmoidales</taxon>
        <taxon>Metamycoplasmataceae</taxon>
        <taxon>Mycoplasmopsis</taxon>
    </lineage>
</organism>